<sequence>MPSKAFETLPNIYLVGPMGAGKTTVGRHLAELLGREFLDSDHEIERKTGATIPWIFEKEGEVGFRTRETVVLNELTSRKALVLATGGGAITQAPNREFLKQRGIVVYLYTPVELQLQRTYRDKNRPLLQVENPEQKLRDLLKIRDPLYREVAHYTIETNQGAARDLAQKILQLILSNKLK</sequence>
<reference key="1">
    <citation type="journal article" date="2008" name="PLoS ONE">
        <title>Comparative analysis of Acinetobacters: three genomes for three lifestyles.</title>
        <authorList>
            <person name="Vallenet D."/>
            <person name="Nordmann P."/>
            <person name="Barbe V."/>
            <person name="Poirel L."/>
            <person name="Mangenot S."/>
            <person name="Bataille E."/>
            <person name="Dossat C."/>
            <person name="Gas S."/>
            <person name="Kreimeyer A."/>
            <person name="Lenoble P."/>
            <person name="Oztas S."/>
            <person name="Poulain J."/>
            <person name="Segurens B."/>
            <person name="Robert C."/>
            <person name="Abergel C."/>
            <person name="Claverie J.-M."/>
            <person name="Raoult D."/>
            <person name="Medigue C."/>
            <person name="Weissenbach J."/>
            <person name="Cruveiller S."/>
        </authorList>
    </citation>
    <scope>NUCLEOTIDE SEQUENCE [LARGE SCALE GENOMIC DNA]</scope>
    <source>
        <strain>AYE</strain>
    </source>
</reference>
<evidence type="ECO:0000255" key="1">
    <source>
        <dbReference type="HAMAP-Rule" id="MF_00109"/>
    </source>
</evidence>
<organism>
    <name type="scientific">Acinetobacter baumannii (strain AYE)</name>
    <dbReference type="NCBI Taxonomy" id="509173"/>
    <lineage>
        <taxon>Bacteria</taxon>
        <taxon>Pseudomonadati</taxon>
        <taxon>Pseudomonadota</taxon>
        <taxon>Gammaproteobacteria</taxon>
        <taxon>Moraxellales</taxon>
        <taxon>Moraxellaceae</taxon>
        <taxon>Acinetobacter</taxon>
        <taxon>Acinetobacter calcoaceticus/baumannii complex</taxon>
    </lineage>
</organism>
<accession>B0V8M8</accession>
<comment type="function">
    <text evidence="1">Catalyzes the specific phosphorylation of the 3-hydroxyl group of shikimic acid using ATP as a cosubstrate.</text>
</comment>
<comment type="catalytic activity">
    <reaction evidence="1">
        <text>shikimate + ATP = 3-phosphoshikimate + ADP + H(+)</text>
        <dbReference type="Rhea" id="RHEA:13121"/>
        <dbReference type="ChEBI" id="CHEBI:15378"/>
        <dbReference type="ChEBI" id="CHEBI:30616"/>
        <dbReference type="ChEBI" id="CHEBI:36208"/>
        <dbReference type="ChEBI" id="CHEBI:145989"/>
        <dbReference type="ChEBI" id="CHEBI:456216"/>
        <dbReference type="EC" id="2.7.1.71"/>
    </reaction>
</comment>
<comment type="cofactor">
    <cofactor evidence="1">
        <name>Mg(2+)</name>
        <dbReference type="ChEBI" id="CHEBI:18420"/>
    </cofactor>
    <text evidence="1">Binds 1 Mg(2+) ion per subunit.</text>
</comment>
<comment type="pathway">
    <text evidence="1">Metabolic intermediate biosynthesis; chorismate biosynthesis; chorismate from D-erythrose 4-phosphate and phosphoenolpyruvate: step 5/7.</text>
</comment>
<comment type="subunit">
    <text evidence="1">Monomer.</text>
</comment>
<comment type="subcellular location">
    <subcellularLocation>
        <location evidence="1">Cytoplasm</location>
    </subcellularLocation>
</comment>
<comment type="similarity">
    <text evidence="1">Belongs to the shikimate kinase family.</text>
</comment>
<gene>
    <name evidence="1" type="primary">aroK</name>
    <name type="ordered locus">ABAYE0295</name>
</gene>
<name>AROK_ACIBY</name>
<protein>
    <recommendedName>
        <fullName evidence="1">Shikimate kinase</fullName>
        <shortName evidence="1">SK</shortName>
        <ecNumber evidence="1">2.7.1.71</ecNumber>
    </recommendedName>
</protein>
<dbReference type="EC" id="2.7.1.71" evidence="1"/>
<dbReference type="EMBL" id="CU459141">
    <property type="protein sequence ID" value="CAM85274.1"/>
    <property type="molecule type" value="Genomic_DNA"/>
</dbReference>
<dbReference type="SMR" id="B0V8M8"/>
<dbReference type="EnsemblBacteria" id="CAM85274">
    <property type="protein sequence ID" value="CAM85274"/>
    <property type="gene ID" value="ABAYE0295"/>
</dbReference>
<dbReference type="KEGG" id="aby:ABAYE0295"/>
<dbReference type="HOGENOM" id="CLU_057607_2_2_6"/>
<dbReference type="UniPathway" id="UPA00053">
    <property type="reaction ID" value="UER00088"/>
</dbReference>
<dbReference type="GO" id="GO:0005829">
    <property type="term" value="C:cytosol"/>
    <property type="evidence" value="ECO:0007669"/>
    <property type="project" value="TreeGrafter"/>
</dbReference>
<dbReference type="GO" id="GO:0005524">
    <property type="term" value="F:ATP binding"/>
    <property type="evidence" value="ECO:0007669"/>
    <property type="project" value="UniProtKB-UniRule"/>
</dbReference>
<dbReference type="GO" id="GO:0000287">
    <property type="term" value="F:magnesium ion binding"/>
    <property type="evidence" value="ECO:0007669"/>
    <property type="project" value="UniProtKB-UniRule"/>
</dbReference>
<dbReference type="GO" id="GO:0004765">
    <property type="term" value="F:shikimate kinase activity"/>
    <property type="evidence" value="ECO:0007669"/>
    <property type="project" value="UniProtKB-UniRule"/>
</dbReference>
<dbReference type="GO" id="GO:0008652">
    <property type="term" value="P:amino acid biosynthetic process"/>
    <property type="evidence" value="ECO:0007669"/>
    <property type="project" value="UniProtKB-KW"/>
</dbReference>
<dbReference type="GO" id="GO:0009073">
    <property type="term" value="P:aromatic amino acid family biosynthetic process"/>
    <property type="evidence" value="ECO:0007669"/>
    <property type="project" value="UniProtKB-KW"/>
</dbReference>
<dbReference type="GO" id="GO:0009423">
    <property type="term" value="P:chorismate biosynthetic process"/>
    <property type="evidence" value="ECO:0007669"/>
    <property type="project" value="UniProtKB-UniRule"/>
</dbReference>
<dbReference type="CDD" id="cd00464">
    <property type="entry name" value="SK"/>
    <property type="match status" value="1"/>
</dbReference>
<dbReference type="Gene3D" id="3.40.50.300">
    <property type="entry name" value="P-loop containing nucleotide triphosphate hydrolases"/>
    <property type="match status" value="1"/>
</dbReference>
<dbReference type="HAMAP" id="MF_00109">
    <property type="entry name" value="Shikimate_kinase"/>
    <property type="match status" value="1"/>
</dbReference>
<dbReference type="InterPro" id="IPR027417">
    <property type="entry name" value="P-loop_NTPase"/>
</dbReference>
<dbReference type="InterPro" id="IPR031322">
    <property type="entry name" value="Shikimate/glucono_kinase"/>
</dbReference>
<dbReference type="InterPro" id="IPR000623">
    <property type="entry name" value="Shikimate_kinase/TSH1"/>
</dbReference>
<dbReference type="InterPro" id="IPR023000">
    <property type="entry name" value="Shikimate_kinase_CS"/>
</dbReference>
<dbReference type="NCBIfam" id="NF003456">
    <property type="entry name" value="PRK05057.1"/>
    <property type="match status" value="1"/>
</dbReference>
<dbReference type="PANTHER" id="PTHR21087">
    <property type="entry name" value="SHIKIMATE KINASE"/>
    <property type="match status" value="1"/>
</dbReference>
<dbReference type="PANTHER" id="PTHR21087:SF16">
    <property type="entry name" value="SHIKIMATE KINASE 1, CHLOROPLASTIC"/>
    <property type="match status" value="1"/>
</dbReference>
<dbReference type="Pfam" id="PF01202">
    <property type="entry name" value="SKI"/>
    <property type="match status" value="1"/>
</dbReference>
<dbReference type="PRINTS" id="PR01100">
    <property type="entry name" value="SHIKIMTKNASE"/>
</dbReference>
<dbReference type="SUPFAM" id="SSF52540">
    <property type="entry name" value="P-loop containing nucleoside triphosphate hydrolases"/>
    <property type="match status" value="1"/>
</dbReference>
<dbReference type="PROSITE" id="PS01128">
    <property type="entry name" value="SHIKIMATE_KINASE"/>
    <property type="match status" value="1"/>
</dbReference>
<feature type="chain" id="PRO_1000094367" description="Shikimate kinase">
    <location>
        <begin position="1"/>
        <end position="180"/>
    </location>
</feature>
<feature type="binding site" evidence="1">
    <location>
        <begin position="19"/>
        <end position="24"/>
    </location>
    <ligand>
        <name>ATP</name>
        <dbReference type="ChEBI" id="CHEBI:30616"/>
    </ligand>
</feature>
<feature type="binding site" evidence="1">
    <location>
        <position position="23"/>
    </location>
    <ligand>
        <name>Mg(2+)</name>
        <dbReference type="ChEBI" id="CHEBI:18420"/>
    </ligand>
</feature>
<feature type="binding site" evidence="1">
    <location>
        <position position="41"/>
    </location>
    <ligand>
        <name>substrate</name>
    </ligand>
</feature>
<feature type="binding site" evidence="1">
    <location>
        <position position="65"/>
    </location>
    <ligand>
        <name>substrate</name>
    </ligand>
</feature>
<feature type="binding site" evidence="1">
    <location>
        <position position="87"/>
    </location>
    <ligand>
        <name>substrate</name>
    </ligand>
</feature>
<feature type="binding site" evidence="1">
    <location>
        <position position="125"/>
    </location>
    <ligand>
        <name>ATP</name>
        <dbReference type="ChEBI" id="CHEBI:30616"/>
    </ligand>
</feature>
<feature type="binding site" evidence="1">
    <location>
        <position position="144"/>
    </location>
    <ligand>
        <name>substrate</name>
    </ligand>
</feature>
<keyword id="KW-0028">Amino-acid biosynthesis</keyword>
<keyword id="KW-0057">Aromatic amino acid biosynthesis</keyword>
<keyword id="KW-0067">ATP-binding</keyword>
<keyword id="KW-0963">Cytoplasm</keyword>
<keyword id="KW-0418">Kinase</keyword>
<keyword id="KW-0460">Magnesium</keyword>
<keyword id="KW-0479">Metal-binding</keyword>
<keyword id="KW-0547">Nucleotide-binding</keyword>
<keyword id="KW-0808">Transferase</keyword>
<proteinExistence type="inferred from homology"/>